<dbReference type="EC" id="6.1.1.7" evidence="1"/>
<dbReference type="EMBL" id="CP000885">
    <property type="protein sequence ID" value="ABX42978.1"/>
    <property type="molecule type" value="Genomic_DNA"/>
</dbReference>
<dbReference type="RefSeq" id="WP_012200630.1">
    <property type="nucleotide sequence ID" value="NC_010001.1"/>
</dbReference>
<dbReference type="SMR" id="A9KMW7"/>
<dbReference type="STRING" id="357809.Cphy_2617"/>
<dbReference type="KEGG" id="cpy:Cphy_2617"/>
<dbReference type="eggNOG" id="COG0013">
    <property type="taxonomic scope" value="Bacteria"/>
</dbReference>
<dbReference type="HOGENOM" id="CLU_004485_1_1_9"/>
<dbReference type="OrthoDB" id="9803884at2"/>
<dbReference type="Proteomes" id="UP000000370">
    <property type="component" value="Chromosome"/>
</dbReference>
<dbReference type="GO" id="GO:0005829">
    <property type="term" value="C:cytosol"/>
    <property type="evidence" value="ECO:0007669"/>
    <property type="project" value="TreeGrafter"/>
</dbReference>
<dbReference type="GO" id="GO:0004813">
    <property type="term" value="F:alanine-tRNA ligase activity"/>
    <property type="evidence" value="ECO:0007669"/>
    <property type="project" value="UniProtKB-UniRule"/>
</dbReference>
<dbReference type="GO" id="GO:0002161">
    <property type="term" value="F:aminoacyl-tRNA deacylase activity"/>
    <property type="evidence" value="ECO:0007669"/>
    <property type="project" value="TreeGrafter"/>
</dbReference>
<dbReference type="GO" id="GO:0005524">
    <property type="term" value="F:ATP binding"/>
    <property type="evidence" value="ECO:0007669"/>
    <property type="project" value="UniProtKB-UniRule"/>
</dbReference>
<dbReference type="GO" id="GO:0140096">
    <property type="term" value="F:catalytic activity, acting on a protein"/>
    <property type="evidence" value="ECO:0007669"/>
    <property type="project" value="UniProtKB-ARBA"/>
</dbReference>
<dbReference type="GO" id="GO:0016740">
    <property type="term" value="F:transferase activity"/>
    <property type="evidence" value="ECO:0007669"/>
    <property type="project" value="UniProtKB-ARBA"/>
</dbReference>
<dbReference type="GO" id="GO:0000049">
    <property type="term" value="F:tRNA binding"/>
    <property type="evidence" value="ECO:0007669"/>
    <property type="project" value="UniProtKB-KW"/>
</dbReference>
<dbReference type="GO" id="GO:0008270">
    <property type="term" value="F:zinc ion binding"/>
    <property type="evidence" value="ECO:0007669"/>
    <property type="project" value="UniProtKB-UniRule"/>
</dbReference>
<dbReference type="GO" id="GO:0006419">
    <property type="term" value="P:alanyl-tRNA aminoacylation"/>
    <property type="evidence" value="ECO:0007669"/>
    <property type="project" value="UniProtKB-UniRule"/>
</dbReference>
<dbReference type="CDD" id="cd00673">
    <property type="entry name" value="AlaRS_core"/>
    <property type="match status" value="1"/>
</dbReference>
<dbReference type="FunFam" id="3.10.310.40:FF:000001">
    <property type="entry name" value="Alanine--tRNA ligase"/>
    <property type="match status" value="1"/>
</dbReference>
<dbReference type="FunFam" id="3.30.54.20:FF:000001">
    <property type="entry name" value="Alanine--tRNA ligase"/>
    <property type="match status" value="1"/>
</dbReference>
<dbReference type="FunFam" id="3.30.930.10:FF:000004">
    <property type="entry name" value="Alanine--tRNA ligase"/>
    <property type="match status" value="1"/>
</dbReference>
<dbReference type="FunFam" id="3.30.980.10:FF:000004">
    <property type="entry name" value="Alanine--tRNA ligase, cytoplasmic"/>
    <property type="match status" value="1"/>
</dbReference>
<dbReference type="Gene3D" id="2.40.30.130">
    <property type="match status" value="1"/>
</dbReference>
<dbReference type="Gene3D" id="3.10.310.40">
    <property type="match status" value="1"/>
</dbReference>
<dbReference type="Gene3D" id="3.30.54.20">
    <property type="match status" value="1"/>
</dbReference>
<dbReference type="Gene3D" id="6.10.250.550">
    <property type="match status" value="1"/>
</dbReference>
<dbReference type="Gene3D" id="3.30.930.10">
    <property type="entry name" value="Bira Bifunctional Protein, Domain 2"/>
    <property type="match status" value="1"/>
</dbReference>
<dbReference type="Gene3D" id="3.30.980.10">
    <property type="entry name" value="Threonyl-trna Synthetase, Chain A, domain 2"/>
    <property type="match status" value="1"/>
</dbReference>
<dbReference type="HAMAP" id="MF_00036_B">
    <property type="entry name" value="Ala_tRNA_synth_B"/>
    <property type="match status" value="1"/>
</dbReference>
<dbReference type="InterPro" id="IPR045864">
    <property type="entry name" value="aa-tRNA-synth_II/BPL/LPL"/>
</dbReference>
<dbReference type="InterPro" id="IPR002318">
    <property type="entry name" value="Ala-tRNA-lgiase_IIc"/>
</dbReference>
<dbReference type="InterPro" id="IPR018162">
    <property type="entry name" value="Ala-tRNA-ligase_IIc_anticod-bd"/>
</dbReference>
<dbReference type="InterPro" id="IPR018165">
    <property type="entry name" value="Ala-tRNA-synth_IIc_core"/>
</dbReference>
<dbReference type="InterPro" id="IPR018164">
    <property type="entry name" value="Ala-tRNA-synth_IIc_N"/>
</dbReference>
<dbReference type="InterPro" id="IPR050058">
    <property type="entry name" value="Ala-tRNA_ligase"/>
</dbReference>
<dbReference type="InterPro" id="IPR023033">
    <property type="entry name" value="Ala_tRNA_ligase_euk/bac"/>
</dbReference>
<dbReference type="InterPro" id="IPR003156">
    <property type="entry name" value="DHHA1_dom"/>
</dbReference>
<dbReference type="InterPro" id="IPR018163">
    <property type="entry name" value="Thr/Ala-tRNA-synth_IIc_edit"/>
</dbReference>
<dbReference type="InterPro" id="IPR009000">
    <property type="entry name" value="Transl_B-barrel_sf"/>
</dbReference>
<dbReference type="InterPro" id="IPR012947">
    <property type="entry name" value="tRNA_SAD"/>
</dbReference>
<dbReference type="NCBIfam" id="TIGR00344">
    <property type="entry name" value="alaS"/>
    <property type="match status" value="1"/>
</dbReference>
<dbReference type="PANTHER" id="PTHR11777:SF9">
    <property type="entry name" value="ALANINE--TRNA LIGASE, CYTOPLASMIC"/>
    <property type="match status" value="1"/>
</dbReference>
<dbReference type="PANTHER" id="PTHR11777">
    <property type="entry name" value="ALANYL-TRNA SYNTHETASE"/>
    <property type="match status" value="1"/>
</dbReference>
<dbReference type="Pfam" id="PF02272">
    <property type="entry name" value="DHHA1"/>
    <property type="match status" value="1"/>
</dbReference>
<dbReference type="Pfam" id="PF01411">
    <property type="entry name" value="tRNA-synt_2c"/>
    <property type="match status" value="1"/>
</dbReference>
<dbReference type="Pfam" id="PF07973">
    <property type="entry name" value="tRNA_SAD"/>
    <property type="match status" value="1"/>
</dbReference>
<dbReference type="PRINTS" id="PR00980">
    <property type="entry name" value="TRNASYNTHALA"/>
</dbReference>
<dbReference type="SMART" id="SM00863">
    <property type="entry name" value="tRNA_SAD"/>
    <property type="match status" value="1"/>
</dbReference>
<dbReference type="SUPFAM" id="SSF55681">
    <property type="entry name" value="Class II aaRS and biotin synthetases"/>
    <property type="match status" value="1"/>
</dbReference>
<dbReference type="SUPFAM" id="SSF101353">
    <property type="entry name" value="Putative anticodon-binding domain of alanyl-tRNA synthetase (AlaRS)"/>
    <property type="match status" value="1"/>
</dbReference>
<dbReference type="SUPFAM" id="SSF55186">
    <property type="entry name" value="ThrRS/AlaRS common domain"/>
    <property type="match status" value="1"/>
</dbReference>
<dbReference type="SUPFAM" id="SSF50447">
    <property type="entry name" value="Translation proteins"/>
    <property type="match status" value="1"/>
</dbReference>
<dbReference type="PROSITE" id="PS50860">
    <property type="entry name" value="AA_TRNA_LIGASE_II_ALA"/>
    <property type="match status" value="1"/>
</dbReference>
<evidence type="ECO:0000255" key="1">
    <source>
        <dbReference type="HAMAP-Rule" id="MF_00036"/>
    </source>
</evidence>
<organism>
    <name type="scientific">Lachnoclostridium phytofermentans (strain ATCC 700394 / DSM 18823 / ISDg)</name>
    <name type="common">Clostridium phytofermentans</name>
    <dbReference type="NCBI Taxonomy" id="357809"/>
    <lineage>
        <taxon>Bacteria</taxon>
        <taxon>Bacillati</taxon>
        <taxon>Bacillota</taxon>
        <taxon>Clostridia</taxon>
        <taxon>Lachnospirales</taxon>
        <taxon>Lachnospiraceae</taxon>
    </lineage>
</organism>
<gene>
    <name evidence="1" type="primary">alaS1</name>
    <name type="ordered locus">Cphy_2617</name>
</gene>
<comment type="function">
    <text evidence="1">Catalyzes the attachment of alanine to tRNA(Ala) in a two-step reaction: alanine is first activated by ATP to form Ala-AMP and then transferred to the acceptor end of tRNA(Ala). Also edits incorrectly charged Ser-tRNA(Ala) and Gly-tRNA(Ala) via its editing domain.</text>
</comment>
<comment type="catalytic activity">
    <reaction evidence="1">
        <text>tRNA(Ala) + L-alanine + ATP = L-alanyl-tRNA(Ala) + AMP + diphosphate</text>
        <dbReference type="Rhea" id="RHEA:12540"/>
        <dbReference type="Rhea" id="RHEA-COMP:9657"/>
        <dbReference type="Rhea" id="RHEA-COMP:9923"/>
        <dbReference type="ChEBI" id="CHEBI:30616"/>
        <dbReference type="ChEBI" id="CHEBI:33019"/>
        <dbReference type="ChEBI" id="CHEBI:57972"/>
        <dbReference type="ChEBI" id="CHEBI:78442"/>
        <dbReference type="ChEBI" id="CHEBI:78497"/>
        <dbReference type="ChEBI" id="CHEBI:456215"/>
        <dbReference type="EC" id="6.1.1.7"/>
    </reaction>
</comment>
<comment type="cofactor">
    <cofactor evidence="1">
        <name>Zn(2+)</name>
        <dbReference type="ChEBI" id="CHEBI:29105"/>
    </cofactor>
    <text evidence="1">Binds 1 zinc ion per subunit.</text>
</comment>
<comment type="subcellular location">
    <subcellularLocation>
        <location evidence="1">Cytoplasm</location>
    </subcellularLocation>
</comment>
<comment type="domain">
    <text evidence="1">Consists of three domains; the N-terminal catalytic domain, the editing domain and the C-terminal C-Ala domain. The editing domain removes incorrectly charged amino acids, while the C-Ala domain, along with tRNA(Ala), serves as a bridge to cooperatively bring together the editing and aminoacylation centers thus stimulating deacylation of misacylated tRNAs.</text>
</comment>
<comment type="similarity">
    <text evidence="1">Belongs to the class-II aminoacyl-tRNA synthetase family.</text>
</comment>
<feature type="chain" id="PRO_0000347571" description="Alanine--tRNA ligase 1">
    <location>
        <begin position="1"/>
        <end position="879"/>
    </location>
</feature>
<feature type="binding site" evidence="1">
    <location>
        <position position="566"/>
    </location>
    <ligand>
        <name>Zn(2+)</name>
        <dbReference type="ChEBI" id="CHEBI:29105"/>
    </ligand>
</feature>
<feature type="binding site" evidence="1">
    <location>
        <position position="570"/>
    </location>
    <ligand>
        <name>Zn(2+)</name>
        <dbReference type="ChEBI" id="CHEBI:29105"/>
    </ligand>
</feature>
<feature type="binding site" evidence="1">
    <location>
        <position position="668"/>
    </location>
    <ligand>
        <name>Zn(2+)</name>
        <dbReference type="ChEBI" id="CHEBI:29105"/>
    </ligand>
</feature>
<feature type="binding site" evidence="1">
    <location>
        <position position="672"/>
    </location>
    <ligand>
        <name>Zn(2+)</name>
        <dbReference type="ChEBI" id="CHEBI:29105"/>
    </ligand>
</feature>
<keyword id="KW-0030">Aminoacyl-tRNA synthetase</keyword>
<keyword id="KW-0067">ATP-binding</keyword>
<keyword id="KW-0963">Cytoplasm</keyword>
<keyword id="KW-0436">Ligase</keyword>
<keyword id="KW-0479">Metal-binding</keyword>
<keyword id="KW-0547">Nucleotide-binding</keyword>
<keyword id="KW-0648">Protein biosynthesis</keyword>
<keyword id="KW-1185">Reference proteome</keyword>
<keyword id="KW-0694">RNA-binding</keyword>
<keyword id="KW-0820">tRNA-binding</keyword>
<keyword id="KW-0862">Zinc</keyword>
<proteinExistence type="inferred from homology"/>
<sequence>MKVYGVNELRKMYLDFFESKGHLKLNSFSLVPQNDKSLLLINSGMAPLKPYFTGQEIPPKKRVTTCQKCIRTGDIENIGKTARHGTFFEMLGNFSFGDYFKHEAIAWSWEFLTEVVGLSGDRLYPSIYLEDDEAFDIWNKEVGIAPERIFRMGKADNFWEHGAGPCGPCSEIYYDRGEKYGCGDPNCTVGCECDRFIEVWNNVFTQFNSDGNGNYEELENKNIDTGMGLERLAVVVQDVDTLFDIDTMKAIRDHVCKMANAEYKVDPKKDMSIRLITDHIRSVTFMTSDGIIPSNEGRGYVLRRLLRRAARHGRLLGIQGKFLAELSKTVIAESKDGYPELEEKKEYILKVLTIEEEKFNKTIDQGLSILSEMEEALVSNGTKTLNGEDAFKLYDTYGFPLDLTKEILEEKGFSIDEEGFKKAMQVQRETARSARAVTNYMGADASIYDEIDPAITSNFVGYDRTSHTSKISVLTTETDLTDEVVGGQTATIIVDETPFYATMGGQTADIGFIVGKDAEFEVEDTIKLKGGRVGHLGTVTKGSFKVGETVTLTIDTQKRQAIGKNHSATHLLQKALRNVLGSHVEQAGSFVTSERLRFDFTHFSALTKEEIAKVEAMVNEEIAKNVPVVTDVMSVEDAKKSGAMALFGEKYGDSVRVVTMGDFSKELCGGTHVANTGSITVFKILSEAGIAAGVRRIEAITSNAVFEYYKSMEEELHEAAKVAKTEPASLVKRIESLQEELKTALSENEKLKAKLANNSLGDVMNQVVEVKGVKLLASKVTDADMNGLRNLGDQLKEKLGECVILLASASEDKVNLIAMATDGAMAKGAHAGNLIKEVAVLVGGGGGGRPNMAQAGGKNPSGIDAAIEKAVSVVENQIK</sequence>
<reference key="1">
    <citation type="submission" date="2007-11" db="EMBL/GenBank/DDBJ databases">
        <title>Complete genome sequence of Clostridium phytofermentans ISDg.</title>
        <authorList>
            <person name="Leschine S.B."/>
            <person name="Warnick T.A."/>
            <person name="Blanchard J.L."/>
            <person name="Schnell D.J."/>
            <person name="Petit E.L."/>
            <person name="LaTouf W.G."/>
            <person name="Copeland A."/>
            <person name="Lucas S."/>
            <person name="Lapidus A."/>
            <person name="Barry K."/>
            <person name="Glavina del Rio T."/>
            <person name="Dalin E."/>
            <person name="Tice H."/>
            <person name="Pitluck S."/>
            <person name="Kiss H."/>
            <person name="Brettin T."/>
            <person name="Bruce D."/>
            <person name="Detter J.C."/>
            <person name="Han C."/>
            <person name="Kuske C."/>
            <person name="Schmutz J."/>
            <person name="Larimer F."/>
            <person name="Land M."/>
            <person name="Hauser L."/>
            <person name="Kyrpides N."/>
            <person name="Kim E.A."/>
            <person name="Richardson P."/>
        </authorList>
    </citation>
    <scope>NUCLEOTIDE SEQUENCE [LARGE SCALE GENOMIC DNA]</scope>
    <source>
        <strain>ATCC 700394 / DSM 18823 / ISDg</strain>
    </source>
</reference>
<name>SYA1_LACP7</name>
<protein>
    <recommendedName>
        <fullName evidence="1">Alanine--tRNA ligase 1</fullName>
        <ecNumber evidence="1">6.1.1.7</ecNumber>
    </recommendedName>
    <alternativeName>
        <fullName evidence="1">Alanyl-tRNA synthetase 1</fullName>
        <shortName evidence="1">AlaRS 1</shortName>
    </alternativeName>
</protein>
<accession>A9KMW7</accession>